<dbReference type="EMBL" id="CP000924">
    <property type="protein sequence ID" value="ABY94047.1"/>
    <property type="molecule type" value="Genomic_DNA"/>
</dbReference>
<dbReference type="RefSeq" id="WP_003868564.1">
    <property type="nucleotide sequence ID" value="NC_010321.1"/>
</dbReference>
<dbReference type="SMR" id="B0KCK4"/>
<dbReference type="STRING" id="340099.Teth39_0378"/>
<dbReference type="KEGG" id="tpd:Teth39_0378"/>
<dbReference type="eggNOG" id="COG0185">
    <property type="taxonomic scope" value="Bacteria"/>
</dbReference>
<dbReference type="HOGENOM" id="CLU_144911_0_1_9"/>
<dbReference type="Proteomes" id="UP000002156">
    <property type="component" value="Chromosome"/>
</dbReference>
<dbReference type="GO" id="GO:0005737">
    <property type="term" value="C:cytoplasm"/>
    <property type="evidence" value="ECO:0007669"/>
    <property type="project" value="UniProtKB-ARBA"/>
</dbReference>
<dbReference type="GO" id="GO:0015935">
    <property type="term" value="C:small ribosomal subunit"/>
    <property type="evidence" value="ECO:0007669"/>
    <property type="project" value="InterPro"/>
</dbReference>
<dbReference type="GO" id="GO:0019843">
    <property type="term" value="F:rRNA binding"/>
    <property type="evidence" value="ECO:0007669"/>
    <property type="project" value="UniProtKB-UniRule"/>
</dbReference>
<dbReference type="GO" id="GO:0003735">
    <property type="term" value="F:structural constituent of ribosome"/>
    <property type="evidence" value="ECO:0007669"/>
    <property type="project" value="InterPro"/>
</dbReference>
<dbReference type="GO" id="GO:0000028">
    <property type="term" value="P:ribosomal small subunit assembly"/>
    <property type="evidence" value="ECO:0007669"/>
    <property type="project" value="TreeGrafter"/>
</dbReference>
<dbReference type="GO" id="GO:0006412">
    <property type="term" value="P:translation"/>
    <property type="evidence" value="ECO:0007669"/>
    <property type="project" value="UniProtKB-UniRule"/>
</dbReference>
<dbReference type="FunFam" id="3.30.860.10:FF:000001">
    <property type="entry name" value="30S ribosomal protein S19"/>
    <property type="match status" value="1"/>
</dbReference>
<dbReference type="Gene3D" id="3.30.860.10">
    <property type="entry name" value="30s Ribosomal Protein S19, Chain A"/>
    <property type="match status" value="1"/>
</dbReference>
<dbReference type="HAMAP" id="MF_00531">
    <property type="entry name" value="Ribosomal_uS19"/>
    <property type="match status" value="1"/>
</dbReference>
<dbReference type="InterPro" id="IPR002222">
    <property type="entry name" value="Ribosomal_uS19"/>
</dbReference>
<dbReference type="InterPro" id="IPR005732">
    <property type="entry name" value="Ribosomal_uS19_bac-type"/>
</dbReference>
<dbReference type="InterPro" id="IPR020934">
    <property type="entry name" value="Ribosomal_uS19_CS"/>
</dbReference>
<dbReference type="InterPro" id="IPR023575">
    <property type="entry name" value="Ribosomal_uS19_SF"/>
</dbReference>
<dbReference type="NCBIfam" id="TIGR01050">
    <property type="entry name" value="rpsS_bact"/>
    <property type="match status" value="1"/>
</dbReference>
<dbReference type="PANTHER" id="PTHR11880">
    <property type="entry name" value="RIBOSOMAL PROTEIN S19P FAMILY MEMBER"/>
    <property type="match status" value="1"/>
</dbReference>
<dbReference type="PANTHER" id="PTHR11880:SF8">
    <property type="entry name" value="SMALL RIBOSOMAL SUBUNIT PROTEIN US19M"/>
    <property type="match status" value="1"/>
</dbReference>
<dbReference type="Pfam" id="PF00203">
    <property type="entry name" value="Ribosomal_S19"/>
    <property type="match status" value="1"/>
</dbReference>
<dbReference type="PIRSF" id="PIRSF002144">
    <property type="entry name" value="Ribosomal_S19"/>
    <property type="match status" value="1"/>
</dbReference>
<dbReference type="PRINTS" id="PR00975">
    <property type="entry name" value="RIBOSOMALS19"/>
</dbReference>
<dbReference type="SUPFAM" id="SSF54570">
    <property type="entry name" value="Ribosomal protein S19"/>
    <property type="match status" value="1"/>
</dbReference>
<dbReference type="PROSITE" id="PS00323">
    <property type="entry name" value="RIBOSOMAL_S19"/>
    <property type="match status" value="1"/>
</dbReference>
<feature type="chain" id="PRO_1000128049" description="Small ribosomal subunit protein uS19">
    <location>
        <begin position="1"/>
        <end position="93"/>
    </location>
</feature>
<accession>B0KCK4</accession>
<comment type="function">
    <text evidence="1">Protein S19 forms a complex with S13 that binds strongly to the 16S ribosomal RNA.</text>
</comment>
<comment type="similarity">
    <text evidence="1">Belongs to the universal ribosomal protein uS19 family.</text>
</comment>
<name>RS19_THEP3</name>
<proteinExistence type="inferred from homology"/>
<gene>
    <name evidence="1" type="primary">rpsS</name>
    <name type="ordered locus">Teth39_0378</name>
</gene>
<sequence length="93" mass="10507">MSRSVKKGPYVDPKLLKKIVEMNKKNEKKVIKTWSRSSTIVPEMVGHTIAVHDGRKHVPVYITEAMVGHKLGEFAPTRTFHGHADTEKTSKVK</sequence>
<reference key="1">
    <citation type="submission" date="2008-01" db="EMBL/GenBank/DDBJ databases">
        <title>Complete sequence of Thermoanaerobacter pseudethanolicus 39E.</title>
        <authorList>
            <person name="Copeland A."/>
            <person name="Lucas S."/>
            <person name="Lapidus A."/>
            <person name="Barry K."/>
            <person name="Glavina del Rio T."/>
            <person name="Dalin E."/>
            <person name="Tice H."/>
            <person name="Pitluck S."/>
            <person name="Bruce D."/>
            <person name="Goodwin L."/>
            <person name="Saunders E."/>
            <person name="Brettin T."/>
            <person name="Detter J.C."/>
            <person name="Han C."/>
            <person name="Schmutz J."/>
            <person name="Larimer F."/>
            <person name="Land M."/>
            <person name="Hauser L."/>
            <person name="Kyrpides N."/>
            <person name="Lykidis A."/>
            <person name="Hemme C."/>
            <person name="Fields M.W."/>
            <person name="He Z."/>
            <person name="Zhou J."/>
            <person name="Richardson P."/>
        </authorList>
    </citation>
    <scope>NUCLEOTIDE SEQUENCE [LARGE SCALE GENOMIC DNA]</scope>
    <source>
        <strain>ATCC 33223 / DSM 2355 / 39E</strain>
    </source>
</reference>
<keyword id="KW-1185">Reference proteome</keyword>
<keyword id="KW-0687">Ribonucleoprotein</keyword>
<keyword id="KW-0689">Ribosomal protein</keyword>
<keyword id="KW-0694">RNA-binding</keyword>
<keyword id="KW-0699">rRNA-binding</keyword>
<protein>
    <recommendedName>
        <fullName evidence="1">Small ribosomal subunit protein uS19</fullName>
    </recommendedName>
    <alternativeName>
        <fullName evidence="2">30S ribosomal protein S19</fullName>
    </alternativeName>
</protein>
<evidence type="ECO:0000255" key="1">
    <source>
        <dbReference type="HAMAP-Rule" id="MF_00531"/>
    </source>
</evidence>
<evidence type="ECO:0000305" key="2"/>
<organism>
    <name type="scientific">Thermoanaerobacter pseudethanolicus (strain ATCC 33223 / 39E)</name>
    <name type="common">Clostridium thermohydrosulfuricum</name>
    <dbReference type="NCBI Taxonomy" id="340099"/>
    <lineage>
        <taxon>Bacteria</taxon>
        <taxon>Bacillati</taxon>
        <taxon>Bacillota</taxon>
        <taxon>Clostridia</taxon>
        <taxon>Thermoanaerobacterales</taxon>
        <taxon>Thermoanaerobacteraceae</taxon>
        <taxon>Thermoanaerobacter</taxon>
    </lineage>
</organism>